<keyword id="KW-0030">Aminoacyl-tRNA synthetase</keyword>
<keyword id="KW-0067">ATP-binding</keyword>
<keyword id="KW-0963">Cytoplasm</keyword>
<keyword id="KW-0436">Ligase</keyword>
<keyword id="KW-0460">Magnesium</keyword>
<keyword id="KW-0479">Metal-binding</keyword>
<keyword id="KW-0547">Nucleotide-binding</keyword>
<keyword id="KW-0648">Protein biosynthesis</keyword>
<keyword id="KW-1185">Reference proteome</keyword>
<reference key="1">
    <citation type="journal article" date="2005" name="Genome Res.">
        <title>Genome sequence of Blochmannia pennsylvanicus indicates parallel evolutionary trends among bacterial mutualists of insects.</title>
        <authorList>
            <person name="Degnan P.H."/>
            <person name="Lazarus A.B."/>
            <person name="Wernegreen J.J."/>
        </authorList>
    </citation>
    <scope>NUCLEOTIDE SEQUENCE [LARGE SCALE GENOMIC DNA]</scope>
    <source>
        <strain>BPEN</strain>
    </source>
</reference>
<dbReference type="EC" id="6.1.1.6" evidence="1"/>
<dbReference type="EMBL" id="CP000016">
    <property type="protein sequence ID" value="AAZ40901.1"/>
    <property type="molecule type" value="Genomic_DNA"/>
</dbReference>
<dbReference type="RefSeq" id="WP_011282808.1">
    <property type="nucleotide sequence ID" value="NC_007292.1"/>
</dbReference>
<dbReference type="SMR" id="Q493E1"/>
<dbReference type="STRING" id="291272.BPEN_270"/>
<dbReference type="KEGG" id="bpn:BPEN_270"/>
<dbReference type="eggNOG" id="COG1190">
    <property type="taxonomic scope" value="Bacteria"/>
</dbReference>
<dbReference type="HOGENOM" id="CLU_008255_6_0_6"/>
<dbReference type="OrthoDB" id="9801152at2"/>
<dbReference type="Proteomes" id="UP000007794">
    <property type="component" value="Chromosome"/>
</dbReference>
<dbReference type="GO" id="GO:0005829">
    <property type="term" value="C:cytosol"/>
    <property type="evidence" value="ECO:0007669"/>
    <property type="project" value="TreeGrafter"/>
</dbReference>
<dbReference type="GO" id="GO:0005524">
    <property type="term" value="F:ATP binding"/>
    <property type="evidence" value="ECO:0007669"/>
    <property type="project" value="UniProtKB-UniRule"/>
</dbReference>
<dbReference type="GO" id="GO:0004824">
    <property type="term" value="F:lysine-tRNA ligase activity"/>
    <property type="evidence" value="ECO:0007669"/>
    <property type="project" value="UniProtKB-UniRule"/>
</dbReference>
<dbReference type="GO" id="GO:0000287">
    <property type="term" value="F:magnesium ion binding"/>
    <property type="evidence" value="ECO:0007669"/>
    <property type="project" value="UniProtKB-UniRule"/>
</dbReference>
<dbReference type="GO" id="GO:0000049">
    <property type="term" value="F:tRNA binding"/>
    <property type="evidence" value="ECO:0007669"/>
    <property type="project" value="TreeGrafter"/>
</dbReference>
<dbReference type="GO" id="GO:0006430">
    <property type="term" value="P:lysyl-tRNA aminoacylation"/>
    <property type="evidence" value="ECO:0007669"/>
    <property type="project" value="UniProtKB-UniRule"/>
</dbReference>
<dbReference type="CDD" id="cd00775">
    <property type="entry name" value="LysRS_core"/>
    <property type="match status" value="1"/>
</dbReference>
<dbReference type="CDD" id="cd04322">
    <property type="entry name" value="LysRS_N"/>
    <property type="match status" value="1"/>
</dbReference>
<dbReference type="FunFam" id="2.40.50.140:FF:000024">
    <property type="entry name" value="Lysine--tRNA ligase"/>
    <property type="match status" value="1"/>
</dbReference>
<dbReference type="FunFam" id="3.30.930.10:FF:000001">
    <property type="entry name" value="Lysine--tRNA ligase"/>
    <property type="match status" value="1"/>
</dbReference>
<dbReference type="Gene3D" id="3.30.930.10">
    <property type="entry name" value="Bira Bifunctional Protein, Domain 2"/>
    <property type="match status" value="1"/>
</dbReference>
<dbReference type="Gene3D" id="2.40.50.140">
    <property type="entry name" value="Nucleic acid-binding proteins"/>
    <property type="match status" value="1"/>
</dbReference>
<dbReference type="HAMAP" id="MF_00252">
    <property type="entry name" value="Lys_tRNA_synth_class2"/>
    <property type="match status" value="1"/>
</dbReference>
<dbReference type="InterPro" id="IPR004364">
    <property type="entry name" value="Aa-tRNA-synt_II"/>
</dbReference>
<dbReference type="InterPro" id="IPR006195">
    <property type="entry name" value="aa-tRNA-synth_II"/>
</dbReference>
<dbReference type="InterPro" id="IPR045864">
    <property type="entry name" value="aa-tRNA-synth_II/BPL/LPL"/>
</dbReference>
<dbReference type="InterPro" id="IPR002313">
    <property type="entry name" value="Lys-tRNA-ligase_II"/>
</dbReference>
<dbReference type="InterPro" id="IPR044136">
    <property type="entry name" value="Lys-tRNA-ligase_II_N"/>
</dbReference>
<dbReference type="InterPro" id="IPR018149">
    <property type="entry name" value="Lys-tRNA-synth_II_C"/>
</dbReference>
<dbReference type="InterPro" id="IPR012340">
    <property type="entry name" value="NA-bd_OB-fold"/>
</dbReference>
<dbReference type="InterPro" id="IPR004365">
    <property type="entry name" value="NA-bd_OB_tRNA"/>
</dbReference>
<dbReference type="NCBIfam" id="TIGR00499">
    <property type="entry name" value="lysS_bact"/>
    <property type="match status" value="1"/>
</dbReference>
<dbReference type="NCBIfam" id="NF001756">
    <property type="entry name" value="PRK00484.1"/>
    <property type="match status" value="1"/>
</dbReference>
<dbReference type="PANTHER" id="PTHR42918:SF15">
    <property type="entry name" value="LYSINE--TRNA LIGASE, CHLOROPLASTIC_MITOCHONDRIAL"/>
    <property type="match status" value="1"/>
</dbReference>
<dbReference type="PANTHER" id="PTHR42918">
    <property type="entry name" value="LYSYL-TRNA SYNTHETASE"/>
    <property type="match status" value="1"/>
</dbReference>
<dbReference type="Pfam" id="PF00152">
    <property type="entry name" value="tRNA-synt_2"/>
    <property type="match status" value="1"/>
</dbReference>
<dbReference type="Pfam" id="PF01336">
    <property type="entry name" value="tRNA_anti-codon"/>
    <property type="match status" value="1"/>
</dbReference>
<dbReference type="PRINTS" id="PR00982">
    <property type="entry name" value="TRNASYNTHLYS"/>
</dbReference>
<dbReference type="SUPFAM" id="SSF55681">
    <property type="entry name" value="Class II aaRS and biotin synthetases"/>
    <property type="match status" value="1"/>
</dbReference>
<dbReference type="SUPFAM" id="SSF50249">
    <property type="entry name" value="Nucleic acid-binding proteins"/>
    <property type="match status" value="1"/>
</dbReference>
<dbReference type="PROSITE" id="PS50862">
    <property type="entry name" value="AA_TRNA_LIGASE_II"/>
    <property type="match status" value="1"/>
</dbReference>
<proteinExistence type="inferred from homology"/>
<protein>
    <recommendedName>
        <fullName evidence="1">Lysine--tRNA ligase</fullName>
        <ecNumber evidence="1">6.1.1.6</ecNumber>
    </recommendedName>
    <alternativeName>
        <fullName evidence="1">Lysyl-tRNA synthetase</fullName>
        <shortName evidence="1">LysRS</shortName>
    </alternativeName>
</protein>
<name>SYK_BLOPB</name>
<sequence length="509" mass="59161">MTKYVYSKDQSYQKFNVDDELNIRRKKLSKLREKGVAFPNNFRRNSISNQLHKKYAHTSNVELIQLNIEVTIAGRIISQRIMGKASFITIRDAEGCIQLYITSNSLATNLYDENIKQWDLGDILGARGILFRTRTGELSIYCKEIRLLTKSLRPLPDKFHGLNNQETKYRQRYLDLIINENTRKTFKIRSLVISEIRQFMKKNNFMEVETPMMHTIAGGAIAHPFITHHNKLGIDMYLRIAPELYLKKLVIGGFERIFEINRSFRNEGISSYHNPEFTMMEIYMAYADYRDIIILVQNLLRSVTQKILGSNIINYGDYELDFKHPFTQISIKEAILYYLPETRSQNIDDICTAVSIAKSLGIKVKSCWTLHRIHMVIFEEVIEKKIIQPTCVTSYPIEISPLARRNDNNPEFADRFELFIAGREIGNGFSELNDPEDQKERFLKQAYGKKNKINNNNVHIHYDEDYLIALEYGLPPTAGIGIGIDRLIMLLTDSHTIRDVILFPTLRPK</sequence>
<organism>
    <name type="scientific">Blochmanniella pennsylvanica (strain BPEN)</name>
    <dbReference type="NCBI Taxonomy" id="291272"/>
    <lineage>
        <taxon>Bacteria</taxon>
        <taxon>Pseudomonadati</taxon>
        <taxon>Pseudomonadota</taxon>
        <taxon>Gammaproteobacteria</taxon>
        <taxon>Enterobacterales</taxon>
        <taxon>Enterobacteriaceae</taxon>
        <taxon>ant endosymbionts</taxon>
        <taxon>Candidatus Blochmanniella</taxon>
    </lineage>
</organism>
<gene>
    <name evidence="1" type="primary">lysS</name>
    <name type="ordered locus">BPEN_270</name>
</gene>
<comment type="catalytic activity">
    <reaction evidence="1">
        <text>tRNA(Lys) + L-lysine + ATP = L-lysyl-tRNA(Lys) + AMP + diphosphate</text>
        <dbReference type="Rhea" id="RHEA:20792"/>
        <dbReference type="Rhea" id="RHEA-COMP:9696"/>
        <dbReference type="Rhea" id="RHEA-COMP:9697"/>
        <dbReference type="ChEBI" id="CHEBI:30616"/>
        <dbReference type="ChEBI" id="CHEBI:32551"/>
        <dbReference type="ChEBI" id="CHEBI:33019"/>
        <dbReference type="ChEBI" id="CHEBI:78442"/>
        <dbReference type="ChEBI" id="CHEBI:78529"/>
        <dbReference type="ChEBI" id="CHEBI:456215"/>
        <dbReference type="EC" id="6.1.1.6"/>
    </reaction>
</comment>
<comment type="cofactor">
    <cofactor evidence="1">
        <name>Mg(2+)</name>
        <dbReference type="ChEBI" id="CHEBI:18420"/>
    </cofactor>
    <text evidence="1">Binds 3 Mg(2+) ions per subunit.</text>
</comment>
<comment type="subunit">
    <text evidence="1">Homodimer.</text>
</comment>
<comment type="subcellular location">
    <subcellularLocation>
        <location evidence="1">Cytoplasm</location>
    </subcellularLocation>
</comment>
<comment type="similarity">
    <text evidence="1">Belongs to the class-II aminoacyl-tRNA synthetase family.</text>
</comment>
<evidence type="ECO:0000255" key="1">
    <source>
        <dbReference type="HAMAP-Rule" id="MF_00252"/>
    </source>
</evidence>
<feature type="chain" id="PRO_1000204564" description="Lysine--tRNA ligase">
    <location>
        <begin position="1"/>
        <end position="509"/>
    </location>
</feature>
<feature type="binding site" evidence="1">
    <location>
        <position position="417"/>
    </location>
    <ligand>
        <name>Mg(2+)</name>
        <dbReference type="ChEBI" id="CHEBI:18420"/>
        <label>1</label>
    </ligand>
</feature>
<feature type="binding site" evidence="1">
    <location>
        <position position="424"/>
    </location>
    <ligand>
        <name>Mg(2+)</name>
        <dbReference type="ChEBI" id="CHEBI:18420"/>
        <label>1</label>
    </ligand>
</feature>
<feature type="binding site" evidence="1">
    <location>
        <position position="424"/>
    </location>
    <ligand>
        <name>Mg(2+)</name>
        <dbReference type="ChEBI" id="CHEBI:18420"/>
        <label>2</label>
    </ligand>
</feature>
<accession>Q493E1</accession>